<accession>A9M3W6</accession>
<comment type="function">
    <text evidence="1">One of the primary rRNA binding proteins, it binds directly near the 3'-end of the 23S rRNA, where it nucleates assembly of the 50S subunit.</text>
</comment>
<comment type="subunit">
    <text evidence="1">Part of the 50S ribosomal subunit. Forms a cluster with proteins L14 and L19.</text>
</comment>
<comment type="PTM">
    <text evidence="1">Methylated by PrmB.</text>
</comment>
<comment type="similarity">
    <text evidence="1">Belongs to the universal ribosomal protein uL3 family.</text>
</comment>
<protein>
    <recommendedName>
        <fullName evidence="1">Large ribosomal subunit protein uL3</fullName>
    </recommendedName>
    <alternativeName>
        <fullName evidence="3">50S ribosomal protein L3</fullName>
    </alternativeName>
</protein>
<reference key="1">
    <citation type="journal article" date="2008" name="Genomics">
        <title>Characterization of ST-4821 complex, a unique Neisseria meningitidis clone.</title>
        <authorList>
            <person name="Peng J."/>
            <person name="Yang L."/>
            <person name="Yang F."/>
            <person name="Yang J."/>
            <person name="Yan Y."/>
            <person name="Nie H."/>
            <person name="Zhang X."/>
            <person name="Xiong Z."/>
            <person name="Jiang Y."/>
            <person name="Cheng F."/>
            <person name="Xu X."/>
            <person name="Chen S."/>
            <person name="Sun L."/>
            <person name="Li W."/>
            <person name="Shen Y."/>
            <person name="Shao Z."/>
            <person name="Liang X."/>
            <person name="Xu J."/>
            <person name="Jin Q."/>
        </authorList>
    </citation>
    <scope>NUCLEOTIDE SEQUENCE [LARGE SCALE GENOMIC DNA]</scope>
    <source>
        <strain>053442</strain>
    </source>
</reference>
<sequence length="214" mass="22690">MTLGLVGRKVGMTRVFDEQGVSVPVTVLDMSANRVTQVKSKDTDGYTAVQVTFGQKKANRVNKAEAGHFAKAGVEAGRGLIEFALTEEKLAELKAGDEITVSMFEVGQLVDVTGISKGKGFSGTIKRHNFGAQRTSHGNSRSHRVPGSIGMAQDPGRVFPGKRMAGQYGNTKATVQKLEVVRVDAERQLLLVKGAVPGAVNSDVVVRPSVKVGA</sequence>
<organism>
    <name type="scientific">Neisseria meningitidis serogroup C (strain 053442)</name>
    <dbReference type="NCBI Taxonomy" id="374833"/>
    <lineage>
        <taxon>Bacteria</taxon>
        <taxon>Pseudomonadati</taxon>
        <taxon>Pseudomonadota</taxon>
        <taxon>Betaproteobacteria</taxon>
        <taxon>Neisseriales</taxon>
        <taxon>Neisseriaceae</taxon>
        <taxon>Neisseria</taxon>
    </lineage>
</organism>
<dbReference type="EMBL" id="CP000381">
    <property type="protein sequence ID" value="ABX74128.1"/>
    <property type="molecule type" value="Genomic_DNA"/>
</dbReference>
<dbReference type="RefSeq" id="WP_002231527.1">
    <property type="nucleotide sequence ID" value="NC_010120.1"/>
</dbReference>
<dbReference type="SMR" id="A9M3W6"/>
<dbReference type="KEGG" id="nmn:NMCC_2005"/>
<dbReference type="HOGENOM" id="CLU_044142_4_1_4"/>
<dbReference type="Proteomes" id="UP000001177">
    <property type="component" value="Chromosome"/>
</dbReference>
<dbReference type="GO" id="GO:0022625">
    <property type="term" value="C:cytosolic large ribosomal subunit"/>
    <property type="evidence" value="ECO:0007669"/>
    <property type="project" value="TreeGrafter"/>
</dbReference>
<dbReference type="GO" id="GO:0019843">
    <property type="term" value="F:rRNA binding"/>
    <property type="evidence" value="ECO:0007669"/>
    <property type="project" value="UniProtKB-UniRule"/>
</dbReference>
<dbReference type="GO" id="GO:0003735">
    <property type="term" value="F:structural constituent of ribosome"/>
    <property type="evidence" value="ECO:0007669"/>
    <property type="project" value="InterPro"/>
</dbReference>
<dbReference type="GO" id="GO:0006412">
    <property type="term" value="P:translation"/>
    <property type="evidence" value="ECO:0007669"/>
    <property type="project" value="UniProtKB-UniRule"/>
</dbReference>
<dbReference type="FunFam" id="2.40.30.10:FF:000004">
    <property type="entry name" value="50S ribosomal protein L3"/>
    <property type="match status" value="1"/>
</dbReference>
<dbReference type="FunFam" id="3.30.160.810:FF:000001">
    <property type="entry name" value="50S ribosomal protein L3"/>
    <property type="match status" value="1"/>
</dbReference>
<dbReference type="Gene3D" id="3.30.160.810">
    <property type="match status" value="1"/>
</dbReference>
<dbReference type="Gene3D" id="2.40.30.10">
    <property type="entry name" value="Translation factors"/>
    <property type="match status" value="1"/>
</dbReference>
<dbReference type="HAMAP" id="MF_01325_B">
    <property type="entry name" value="Ribosomal_uL3_B"/>
    <property type="match status" value="1"/>
</dbReference>
<dbReference type="InterPro" id="IPR000597">
    <property type="entry name" value="Ribosomal_uL3"/>
</dbReference>
<dbReference type="InterPro" id="IPR019927">
    <property type="entry name" value="Ribosomal_uL3_bac/org-type"/>
</dbReference>
<dbReference type="InterPro" id="IPR019926">
    <property type="entry name" value="Ribosomal_uL3_CS"/>
</dbReference>
<dbReference type="InterPro" id="IPR009000">
    <property type="entry name" value="Transl_B-barrel_sf"/>
</dbReference>
<dbReference type="NCBIfam" id="TIGR03625">
    <property type="entry name" value="L3_bact"/>
    <property type="match status" value="1"/>
</dbReference>
<dbReference type="PANTHER" id="PTHR11229">
    <property type="entry name" value="50S RIBOSOMAL PROTEIN L3"/>
    <property type="match status" value="1"/>
</dbReference>
<dbReference type="PANTHER" id="PTHR11229:SF16">
    <property type="entry name" value="LARGE RIBOSOMAL SUBUNIT PROTEIN UL3C"/>
    <property type="match status" value="1"/>
</dbReference>
<dbReference type="Pfam" id="PF00297">
    <property type="entry name" value="Ribosomal_L3"/>
    <property type="match status" value="1"/>
</dbReference>
<dbReference type="SUPFAM" id="SSF50447">
    <property type="entry name" value="Translation proteins"/>
    <property type="match status" value="1"/>
</dbReference>
<dbReference type="PROSITE" id="PS00474">
    <property type="entry name" value="RIBOSOMAL_L3"/>
    <property type="match status" value="1"/>
</dbReference>
<proteinExistence type="inferred from homology"/>
<evidence type="ECO:0000255" key="1">
    <source>
        <dbReference type="HAMAP-Rule" id="MF_01325"/>
    </source>
</evidence>
<evidence type="ECO:0000256" key="2">
    <source>
        <dbReference type="SAM" id="MobiDB-lite"/>
    </source>
</evidence>
<evidence type="ECO:0000305" key="3"/>
<keyword id="KW-0488">Methylation</keyword>
<keyword id="KW-0687">Ribonucleoprotein</keyword>
<keyword id="KW-0689">Ribosomal protein</keyword>
<keyword id="KW-0694">RNA-binding</keyword>
<keyword id="KW-0699">rRNA-binding</keyword>
<gene>
    <name evidence="1" type="primary">rplC</name>
    <name type="ordered locus">NMCC_2005</name>
</gene>
<feature type="chain" id="PRO_1000086449" description="Large ribosomal subunit protein uL3">
    <location>
        <begin position="1"/>
        <end position="214"/>
    </location>
</feature>
<feature type="region of interest" description="Disordered" evidence="2">
    <location>
        <begin position="131"/>
        <end position="155"/>
    </location>
</feature>
<feature type="modified residue" description="N5-methylglutamine" evidence="1">
    <location>
        <position position="153"/>
    </location>
</feature>
<name>RL3_NEIM0</name>